<name>RLMKL_PSYIN</name>
<keyword id="KW-0963">Cytoplasm</keyword>
<keyword id="KW-0489">Methyltransferase</keyword>
<keyword id="KW-1185">Reference proteome</keyword>
<keyword id="KW-0694">RNA-binding</keyword>
<keyword id="KW-0698">rRNA processing</keyword>
<keyword id="KW-0949">S-adenosyl-L-methionine</keyword>
<keyword id="KW-0808">Transferase</keyword>
<dbReference type="EC" id="2.1.1.173" evidence="1"/>
<dbReference type="EC" id="2.1.1.264" evidence="1"/>
<dbReference type="EMBL" id="CP000510">
    <property type="protein sequence ID" value="ABM04024.1"/>
    <property type="molecule type" value="Genomic_DNA"/>
</dbReference>
<dbReference type="RefSeq" id="WP_011770584.1">
    <property type="nucleotide sequence ID" value="NC_008709.1"/>
</dbReference>
<dbReference type="SMR" id="A1SX09"/>
<dbReference type="STRING" id="357804.Ping_2283"/>
<dbReference type="KEGG" id="pin:Ping_2283"/>
<dbReference type="eggNOG" id="COG0116">
    <property type="taxonomic scope" value="Bacteria"/>
</dbReference>
<dbReference type="eggNOG" id="COG1092">
    <property type="taxonomic scope" value="Bacteria"/>
</dbReference>
<dbReference type="HOGENOM" id="CLU_014042_2_0_6"/>
<dbReference type="OrthoDB" id="9809404at2"/>
<dbReference type="Proteomes" id="UP000000639">
    <property type="component" value="Chromosome"/>
</dbReference>
<dbReference type="GO" id="GO:0005737">
    <property type="term" value="C:cytoplasm"/>
    <property type="evidence" value="ECO:0007669"/>
    <property type="project" value="UniProtKB-SubCell"/>
</dbReference>
<dbReference type="GO" id="GO:0052915">
    <property type="term" value="F:23S rRNA (guanine(2445)-N(2))-methyltransferase activity"/>
    <property type="evidence" value="ECO:0007669"/>
    <property type="project" value="UniProtKB-UniRule"/>
</dbReference>
<dbReference type="GO" id="GO:0003723">
    <property type="term" value="F:RNA binding"/>
    <property type="evidence" value="ECO:0007669"/>
    <property type="project" value="UniProtKB-KW"/>
</dbReference>
<dbReference type="GO" id="GO:0070043">
    <property type="term" value="F:rRNA (guanine-N7-)-methyltransferase activity"/>
    <property type="evidence" value="ECO:0007669"/>
    <property type="project" value="UniProtKB-UniRule"/>
</dbReference>
<dbReference type="CDD" id="cd02440">
    <property type="entry name" value="AdoMet_MTases"/>
    <property type="match status" value="2"/>
</dbReference>
<dbReference type="CDD" id="cd11715">
    <property type="entry name" value="THUMP_AdoMetMT"/>
    <property type="match status" value="1"/>
</dbReference>
<dbReference type="FunFam" id="3.40.50.150:FF:000039">
    <property type="entry name" value="Ribosomal RNA large subunit methyltransferase K/L"/>
    <property type="match status" value="1"/>
</dbReference>
<dbReference type="Gene3D" id="3.30.2130.30">
    <property type="match status" value="1"/>
</dbReference>
<dbReference type="Gene3D" id="3.30.750.80">
    <property type="entry name" value="RNA methyltransferase domain (HRMD) like"/>
    <property type="match status" value="1"/>
</dbReference>
<dbReference type="Gene3D" id="3.40.50.150">
    <property type="entry name" value="Vaccinia Virus protein VP39"/>
    <property type="match status" value="2"/>
</dbReference>
<dbReference type="HAMAP" id="MF_01858">
    <property type="entry name" value="23SrRNA_methyltr_KL"/>
    <property type="match status" value="1"/>
</dbReference>
<dbReference type="InterPro" id="IPR017244">
    <property type="entry name" value="23SrRNA_methyltr_KL"/>
</dbReference>
<dbReference type="InterPro" id="IPR002052">
    <property type="entry name" value="DNA_methylase_N6_adenine_CS"/>
</dbReference>
<dbReference type="InterPro" id="IPR000241">
    <property type="entry name" value="RlmKL-like_Mtase"/>
</dbReference>
<dbReference type="InterPro" id="IPR053943">
    <property type="entry name" value="RlmKL-like_Mtase_CS"/>
</dbReference>
<dbReference type="InterPro" id="IPR054170">
    <property type="entry name" value="RlmL_1st"/>
</dbReference>
<dbReference type="InterPro" id="IPR019614">
    <property type="entry name" value="SAM-dep_methyl-trfase"/>
</dbReference>
<dbReference type="InterPro" id="IPR029063">
    <property type="entry name" value="SAM-dependent_MTases_sf"/>
</dbReference>
<dbReference type="InterPro" id="IPR004114">
    <property type="entry name" value="THUMP_dom"/>
</dbReference>
<dbReference type="NCBIfam" id="NF008748">
    <property type="entry name" value="PRK11783.1"/>
    <property type="match status" value="1"/>
</dbReference>
<dbReference type="PANTHER" id="PTHR47313">
    <property type="entry name" value="RIBOSOMAL RNA LARGE SUBUNIT METHYLTRANSFERASE K/L"/>
    <property type="match status" value="1"/>
</dbReference>
<dbReference type="PANTHER" id="PTHR47313:SF1">
    <property type="entry name" value="RIBOSOMAL RNA LARGE SUBUNIT METHYLTRANSFERASE K_L"/>
    <property type="match status" value="1"/>
</dbReference>
<dbReference type="Pfam" id="PF10672">
    <property type="entry name" value="Methyltrans_SAM"/>
    <property type="match status" value="1"/>
</dbReference>
<dbReference type="Pfam" id="PF22020">
    <property type="entry name" value="RlmL_1st"/>
    <property type="match status" value="1"/>
</dbReference>
<dbReference type="Pfam" id="PF02926">
    <property type="entry name" value="THUMP"/>
    <property type="match status" value="1"/>
</dbReference>
<dbReference type="Pfam" id="PF01170">
    <property type="entry name" value="UPF0020"/>
    <property type="match status" value="1"/>
</dbReference>
<dbReference type="PIRSF" id="PIRSF037618">
    <property type="entry name" value="RNA_Mtase_bacteria_prd"/>
    <property type="match status" value="1"/>
</dbReference>
<dbReference type="SMART" id="SM00981">
    <property type="entry name" value="THUMP"/>
    <property type="match status" value="1"/>
</dbReference>
<dbReference type="SUPFAM" id="SSF53335">
    <property type="entry name" value="S-adenosyl-L-methionine-dependent methyltransferases"/>
    <property type="match status" value="2"/>
</dbReference>
<dbReference type="PROSITE" id="PS51165">
    <property type="entry name" value="THUMP"/>
    <property type="match status" value="1"/>
</dbReference>
<dbReference type="PROSITE" id="PS01261">
    <property type="entry name" value="UPF0020"/>
    <property type="match status" value="1"/>
</dbReference>
<evidence type="ECO:0000255" key="1">
    <source>
        <dbReference type="HAMAP-Rule" id="MF_01858"/>
    </source>
</evidence>
<evidence type="ECO:0000256" key="2">
    <source>
        <dbReference type="SAM" id="MobiDB-lite"/>
    </source>
</evidence>
<protein>
    <recommendedName>
        <fullName evidence="1">Ribosomal RNA large subunit methyltransferase K/L</fullName>
    </recommendedName>
    <domain>
        <recommendedName>
            <fullName evidence="1">23S rRNA m2G2445 methyltransferase</fullName>
            <ecNumber evidence="1">2.1.1.173</ecNumber>
        </recommendedName>
        <alternativeName>
            <fullName evidence="1">rRNA (guanine-N(2)-)-methyltransferase RlmL</fullName>
        </alternativeName>
    </domain>
    <domain>
        <recommendedName>
            <fullName evidence="1">23S rRNA m7G2069 methyltransferase</fullName>
            <ecNumber evidence="1">2.1.1.264</ecNumber>
        </recommendedName>
        <alternativeName>
            <fullName evidence="1">rRNA (guanine-N(7)-)-methyltransferase RlmK</fullName>
        </alternativeName>
    </domain>
</protein>
<comment type="function">
    <text evidence="1">Specifically methylates the guanine in position 2445 (m2G2445) and the guanine in position 2069 (m7G2069) of 23S rRNA.</text>
</comment>
<comment type="catalytic activity">
    <reaction evidence="1">
        <text>guanosine(2445) in 23S rRNA + S-adenosyl-L-methionine = N(2)-methylguanosine(2445) in 23S rRNA + S-adenosyl-L-homocysteine + H(+)</text>
        <dbReference type="Rhea" id="RHEA:42740"/>
        <dbReference type="Rhea" id="RHEA-COMP:10215"/>
        <dbReference type="Rhea" id="RHEA-COMP:10216"/>
        <dbReference type="ChEBI" id="CHEBI:15378"/>
        <dbReference type="ChEBI" id="CHEBI:57856"/>
        <dbReference type="ChEBI" id="CHEBI:59789"/>
        <dbReference type="ChEBI" id="CHEBI:74269"/>
        <dbReference type="ChEBI" id="CHEBI:74481"/>
        <dbReference type="EC" id="2.1.1.173"/>
    </reaction>
</comment>
<comment type="catalytic activity">
    <reaction evidence="1">
        <text>guanosine(2069) in 23S rRNA + S-adenosyl-L-methionine = N(2)-methylguanosine(2069) in 23S rRNA + S-adenosyl-L-homocysteine + H(+)</text>
        <dbReference type="Rhea" id="RHEA:43772"/>
        <dbReference type="Rhea" id="RHEA-COMP:10688"/>
        <dbReference type="Rhea" id="RHEA-COMP:10689"/>
        <dbReference type="ChEBI" id="CHEBI:15378"/>
        <dbReference type="ChEBI" id="CHEBI:57856"/>
        <dbReference type="ChEBI" id="CHEBI:59789"/>
        <dbReference type="ChEBI" id="CHEBI:74269"/>
        <dbReference type="ChEBI" id="CHEBI:74481"/>
        <dbReference type="EC" id="2.1.1.264"/>
    </reaction>
</comment>
<comment type="subcellular location">
    <subcellularLocation>
        <location evidence="1">Cytoplasm</location>
    </subcellularLocation>
</comment>
<comment type="similarity">
    <text evidence="1">Belongs to the methyltransferase superfamily. RlmKL family.</text>
</comment>
<gene>
    <name evidence="1" type="primary">rlmL</name>
    <name type="ordered locus">Ping_2283</name>
</gene>
<reference key="1">
    <citation type="journal article" date="2008" name="BMC Genomics">
        <title>Genomics of an extreme psychrophile, Psychromonas ingrahamii.</title>
        <authorList>
            <person name="Riley M."/>
            <person name="Staley J.T."/>
            <person name="Danchin A."/>
            <person name="Wang T.Z."/>
            <person name="Brettin T.S."/>
            <person name="Hauser L.J."/>
            <person name="Land M.L."/>
            <person name="Thompson L.S."/>
        </authorList>
    </citation>
    <scope>NUCLEOTIDE SEQUENCE [LARGE SCALE GENOMIC DNA]</scope>
    <source>
        <strain>DSM 17664 / CCUG 51855 / 37</strain>
    </source>
</reference>
<feature type="chain" id="PRO_0000366802" description="Ribosomal RNA large subunit methyltransferase K/L">
    <location>
        <begin position="1"/>
        <end position="749"/>
    </location>
</feature>
<feature type="domain" description="THUMP" evidence="1">
    <location>
        <begin position="43"/>
        <end position="154"/>
    </location>
</feature>
<feature type="region of interest" description="Disordered" evidence="2">
    <location>
        <begin position="386"/>
        <end position="406"/>
    </location>
</feature>
<organism>
    <name type="scientific">Psychromonas ingrahamii (strain DSM 17664 / CCUG 51855 / 37)</name>
    <dbReference type="NCBI Taxonomy" id="357804"/>
    <lineage>
        <taxon>Bacteria</taxon>
        <taxon>Pseudomonadati</taxon>
        <taxon>Pseudomonadota</taxon>
        <taxon>Gammaproteobacteria</taxon>
        <taxon>Alteromonadales</taxon>
        <taxon>Psychromonadaceae</taxon>
        <taxon>Psychromonas</taxon>
    </lineage>
</organism>
<proteinExistence type="inferred from homology"/>
<accession>A1SX09</accession>
<sequence length="749" mass="85600">MLSYFIPTAKGLAPLLEVELKEMGIENPQQMNGGVKFEGTLEQGYKVCLWSRFASRVLLKLSEFKVLDSMDLYLGCSNIPWETHFDVDKTFSIDFSGTNDEIRNTQFGALKIKDAIVDRFRKHFDERPNVQKRDADIRFNGRLWKDKATIYLDLSGSPLHLRGYRTIAGEAPLRETLAAGIIKRSGWQGEALLDPMCGSGTLVIEAAMMALNIAPGSLRETFGFEKWKKHDQECWQTLKTSAQVYGRRAVNQCETRFYGSDLSKDMIEIARKNAQRAGVGEVIEFSVTDAKKVLPPEELETGMLITNPPYGERLGSFSDTITLYTELGYHFKDAFAGWNLSMFAMDTELLSCLGMRAGKSFKFFNGPIECVLKNYRISPKRPAVEVEPVAPKKTNKETPEPINPWTMGQNESVVEAAIENESELVFKEVQQIKPAIYAEEFANRLLKNLKQLEKWAKREGVECYRLYDADLPEYNVAIDRYAEYIIIQEYRAPKEIETQKVRRRFLDVVSTVRYVLNLPDDKLVIKVRERQKGRQQYEKLDTKKQSLVVHEGQAKMLVNLQDYLDTGLFLDHRPTRLLIGNMAKGKDFLNLFCYTATASVHAALGGAKSTTSVDMSKTYLAWGEDNFAENGIKGKHEFIQQDCIKWLQHAHEMYDLIFIDPPTFSNSKRMNDVFDVQEDHVALLTSASQRLNKQGEIIFSNNKRGFKLDVDAIKALGFYIKDISQSSIPEDFRRNKKIHQCWILTKHTD</sequence>